<keyword id="KW-0175">Coiled coil</keyword>
<keyword id="KW-0963">Cytoplasm</keyword>
<feature type="chain" id="PRO_1000061977" description="Pole-localizer protein TmaR">
    <location>
        <begin position="1"/>
        <end position="109"/>
    </location>
</feature>
<feature type="coiled-coil region" evidence="1">
    <location>
        <begin position="14"/>
        <end position="41"/>
    </location>
</feature>
<reference key="1">
    <citation type="journal article" date="2008" name="J. Bacteriol.">
        <title>The pangenome structure of Escherichia coli: comparative genomic analysis of E. coli commensal and pathogenic isolates.</title>
        <authorList>
            <person name="Rasko D.A."/>
            <person name="Rosovitz M.J."/>
            <person name="Myers G.S.A."/>
            <person name="Mongodin E.F."/>
            <person name="Fricke W.F."/>
            <person name="Gajer P."/>
            <person name="Crabtree J."/>
            <person name="Sebaihia M."/>
            <person name="Thomson N.R."/>
            <person name="Chaudhuri R."/>
            <person name="Henderson I.R."/>
            <person name="Sperandio V."/>
            <person name="Ravel J."/>
        </authorList>
    </citation>
    <scope>NUCLEOTIDE SEQUENCE [LARGE SCALE GENOMIC DNA]</scope>
    <source>
        <strain>HS</strain>
    </source>
</reference>
<proteinExistence type="inferred from homology"/>
<dbReference type="EMBL" id="CP000802">
    <property type="protein sequence ID" value="ABV06434.1"/>
    <property type="molecule type" value="Genomic_DNA"/>
</dbReference>
<dbReference type="RefSeq" id="WP_000450409.1">
    <property type="nucleotide sequence ID" value="NC_009800.1"/>
</dbReference>
<dbReference type="SMR" id="A8A1N0"/>
<dbReference type="KEGG" id="ecx:EcHS_A2145"/>
<dbReference type="HOGENOM" id="CLU_153146_0_0_6"/>
<dbReference type="GO" id="GO:0005829">
    <property type="term" value="C:cytosol"/>
    <property type="evidence" value="ECO:0007669"/>
    <property type="project" value="TreeGrafter"/>
</dbReference>
<dbReference type="HAMAP" id="MF_00683">
    <property type="entry name" value="Pole_loc_TmaR"/>
    <property type="match status" value="1"/>
</dbReference>
<dbReference type="InterPro" id="IPR007458">
    <property type="entry name" value="DUF496"/>
</dbReference>
<dbReference type="InterPro" id="IPR053375">
    <property type="entry name" value="UPF0265"/>
</dbReference>
<dbReference type="NCBIfam" id="NF003844">
    <property type="entry name" value="PRK05423.1"/>
    <property type="match status" value="1"/>
</dbReference>
<dbReference type="NCBIfam" id="NF040881">
    <property type="entry name" value="PTS_reg_TmaR"/>
    <property type="match status" value="1"/>
</dbReference>
<dbReference type="PANTHER" id="PTHR39591">
    <property type="entry name" value="UPF0265 PROTEIN YEEX"/>
    <property type="match status" value="1"/>
</dbReference>
<dbReference type="PANTHER" id="PTHR39591:SF1">
    <property type="entry name" value="UPF0265 PROTEIN YEEX"/>
    <property type="match status" value="1"/>
</dbReference>
<dbReference type="Pfam" id="PF04363">
    <property type="entry name" value="DUF496"/>
    <property type="match status" value="1"/>
</dbReference>
<dbReference type="PIRSF" id="PIRSF028773">
    <property type="entry name" value="UCP028773"/>
    <property type="match status" value="1"/>
</dbReference>
<comment type="function">
    <text evidence="1">Pole-localizer protein involved in the regulation of several cellular processes.</text>
</comment>
<comment type="subcellular location">
    <subcellularLocation>
        <location evidence="1">Cytoplasm</location>
    </subcellularLocation>
    <text evidence="1">Forms clusters that localize mainly near one pole of the cell.</text>
</comment>
<comment type="similarity">
    <text evidence="1">Belongs to the pole-localizer TmaR family.</text>
</comment>
<protein>
    <recommendedName>
        <fullName evidence="1">Pole-localizer protein TmaR</fullName>
    </recommendedName>
</protein>
<sequence>METTKPSFQDVLEFVRLFRRKNKLQREIQDVEKKIRDNQKRVLLLDNLSDYIKPGMSVEAIQGIIASMKGDYEDRVDDYIIKNAELSKERRDISKKLKAMGEMKNGEAK</sequence>
<gene>
    <name evidence="1" type="primary">tmaR</name>
    <name type="ordered locus">EcHS_A2145</name>
</gene>
<organism>
    <name type="scientific">Escherichia coli O9:H4 (strain HS)</name>
    <dbReference type="NCBI Taxonomy" id="331112"/>
    <lineage>
        <taxon>Bacteria</taxon>
        <taxon>Pseudomonadati</taxon>
        <taxon>Pseudomonadota</taxon>
        <taxon>Gammaproteobacteria</taxon>
        <taxon>Enterobacterales</taxon>
        <taxon>Enterobacteriaceae</taxon>
        <taxon>Escherichia</taxon>
    </lineage>
</organism>
<name>TMAR_ECOHS</name>
<accession>A8A1N0</accession>
<evidence type="ECO:0000255" key="1">
    <source>
        <dbReference type="HAMAP-Rule" id="MF_00683"/>
    </source>
</evidence>